<keyword id="KW-0028">Amino-acid biosynthesis</keyword>
<keyword id="KW-0055">Arginine biosynthesis</keyword>
<keyword id="KW-0963">Cytoplasm</keyword>
<keyword id="KW-0521">NADP</keyword>
<keyword id="KW-0560">Oxidoreductase</keyword>
<proteinExistence type="inferred from homology"/>
<organism>
    <name type="scientific">Paenarthrobacter aurescens (strain TC1)</name>
    <dbReference type="NCBI Taxonomy" id="290340"/>
    <lineage>
        <taxon>Bacteria</taxon>
        <taxon>Bacillati</taxon>
        <taxon>Actinomycetota</taxon>
        <taxon>Actinomycetes</taxon>
        <taxon>Micrococcales</taxon>
        <taxon>Micrococcaceae</taxon>
        <taxon>Paenarthrobacter</taxon>
    </lineage>
</organism>
<feature type="chain" id="PRO_1000010974" description="N-acetyl-gamma-glutamyl-phosphate reductase">
    <location>
        <begin position="1"/>
        <end position="343"/>
    </location>
</feature>
<feature type="active site" evidence="1">
    <location>
        <position position="146"/>
    </location>
</feature>
<dbReference type="EC" id="1.2.1.38" evidence="1"/>
<dbReference type="EMBL" id="CP000474">
    <property type="protein sequence ID" value="ABM10170.1"/>
    <property type="molecule type" value="Genomic_DNA"/>
</dbReference>
<dbReference type="RefSeq" id="WP_011774342.1">
    <property type="nucleotide sequence ID" value="NC_008711.1"/>
</dbReference>
<dbReference type="SMR" id="A1R585"/>
<dbReference type="STRING" id="290340.AAur_1631"/>
<dbReference type="KEGG" id="aau:AAur_1631"/>
<dbReference type="eggNOG" id="COG0002">
    <property type="taxonomic scope" value="Bacteria"/>
</dbReference>
<dbReference type="HOGENOM" id="CLU_006384_0_0_11"/>
<dbReference type="OrthoDB" id="9801289at2"/>
<dbReference type="UniPathway" id="UPA00068">
    <property type="reaction ID" value="UER00108"/>
</dbReference>
<dbReference type="Proteomes" id="UP000000637">
    <property type="component" value="Chromosome"/>
</dbReference>
<dbReference type="GO" id="GO:0005737">
    <property type="term" value="C:cytoplasm"/>
    <property type="evidence" value="ECO:0007669"/>
    <property type="project" value="UniProtKB-SubCell"/>
</dbReference>
<dbReference type="GO" id="GO:0003942">
    <property type="term" value="F:N-acetyl-gamma-glutamyl-phosphate reductase activity"/>
    <property type="evidence" value="ECO:0007669"/>
    <property type="project" value="UniProtKB-UniRule"/>
</dbReference>
<dbReference type="GO" id="GO:0051287">
    <property type="term" value="F:NAD binding"/>
    <property type="evidence" value="ECO:0007669"/>
    <property type="project" value="InterPro"/>
</dbReference>
<dbReference type="GO" id="GO:0070401">
    <property type="term" value="F:NADP+ binding"/>
    <property type="evidence" value="ECO:0007669"/>
    <property type="project" value="InterPro"/>
</dbReference>
<dbReference type="GO" id="GO:0006526">
    <property type="term" value="P:L-arginine biosynthetic process"/>
    <property type="evidence" value="ECO:0007669"/>
    <property type="project" value="UniProtKB-UniRule"/>
</dbReference>
<dbReference type="CDD" id="cd24148">
    <property type="entry name" value="AGPR_1_actinobacAGPR_like"/>
    <property type="match status" value="1"/>
</dbReference>
<dbReference type="CDD" id="cd23934">
    <property type="entry name" value="AGPR_1_C"/>
    <property type="match status" value="1"/>
</dbReference>
<dbReference type="FunFam" id="3.30.360.10:FF:000014">
    <property type="entry name" value="N-acetyl-gamma-glutamyl-phosphate reductase"/>
    <property type="match status" value="1"/>
</dbReference>
<dbReference type="Gene3D" id="3.30.360.10">
    <property type="entry name" value="Dihydrodipicolinate Reductase, domain 2"/>
    <property type="match status" value="1"/>
</dbReference>
<dbReference type="Gene3D" id="3.40.50.720">
    <property type="entry name" value="NAD(P)-binding Rossmann-like Domain"/>
    <property type="match status" value="1"/>
</dbReference>
<dbReference type="HAMAP" id="MF_00150">
    <property type="entry name" value="ArgC_type1"/>
    <property type="match status" value="1"/>
</dbReference>
<dbReference type="InterPro" id="IPR023013">
    <property type="entry name" value="AGPR_AS"/>
</dbReference>
<dbReference type="InterPro" id="IPR000706">
    <property type="entry name" value="AGPR_type-1"/>
</dbReference>
<dbReference type="InterPro" id="IPR036291">
    <property type="entry name" value="NAD(P)-bd_dom_sf"/>
</dbReference>
<dbReference type="InterPro" id="IPR050085">
    <property type="entry name" value="NAGSA_dehydrogenase"/>
</dbReference>
<dbReference type="InterPro" id="IPR000534">
    <property type="entry name" value="Semialdehyde_DH_NAD-bd"/>
</dbReference>
<dbReference type="NCBIfam" id="TIGR01850">
    <property type="entry name" value="argC"/>
    <property type="match status" value="1"/>
</dbReference>
<dbReference type="PANTHER" id="PTHR32338:SF10">
    <property type="entry name" value="N-ACETYL-GAMMA-GLUTAMYL-PHOSPHATE REDUCTASE, CHLOROPLASTIC-RELATED"/>
    <property type="match status" value="1"/>
</dbReference>
<dbReference type="PANTHER" id="PTHR32338">
    <property type="entry name" value="N-ACETYL-GAMMA-GLUTAMYL-PHOSPHATE REDUCTASE, CHLOROPLASTIC-RELATED-RELATED"/>
    <property type="match status" value="1"/>
</dbReference>
<dbReference type="Pfam" id="PF01118">
    <property type="entry name" value="Semialdhyde_dh"/>
    <property type="match status" value="1"/>
</dbReference>
<dbReference type="Pfam" id="PF22698">
    <property type="entry name" value="Semialdhyde_dhC_1"/>
    <property type="match status" value="1"/>
</dbReference>
<dbReference type="SMART" id="SM00859">
    <property type="entry name" value="Semialdhyde_dh"/>
    <property type="match status" value="1"/>
</dbReference>
<dbReference type="SUPFAM" id="SSF55347">
    <property type="entry name" value="Glyceraldehyde-3-phosphate dehydrogenase-like, C-terminal domain"/>
    <property type="match status" value="1"/>
</dbReference>
<dbReference type="SUPFAM" id="SSF51735">
    <property type="entry name" value="NAD(P)-binding Rossmann-fold domains"/>
    <property type="match status" value="1"/>
</dbReference>
<dbReference type="PROSITE" id="PS01224">
    <property type="entry name" value="ARGC"/>
    <property type="match status" value="1"/>
</dbReference>
<reference key="1">
    <citation type="journal article" date="2006" name="PLoS Genet.">
        <title>Secrets of soil survival revealed by the genome sequence of Arthrobacter aurescens TC1.</title>
        <authorList>
            <person name="Mongodin E.F."/>
            <person name="Shapir N."/>
            <person name="Daugherty S.C."/>
            <person name="DeBoy R.T."/>
            <person name="Emerson J.B."/>
            <person name="Shvartzbeyn A."/>
            <person name="Radune D."/>
            <person name="Vamathevan J."/>
            <person name="Riggs F."/>
            <person name="Grinberg V."/>
            <person name="Khouri H.M."/>
            <person name="Wackett L.P."/>
            <person name="Nelson K.E."/>
            <person name="Sadowsky M.J."/>
        </authorList>
    </citation>
    <scope>NUCLEOTIDE SEQUENCE [LARGE SCALE GENOMIC DNA]</scope>
    <source>
        <strain>TC1</strain>
    </source>
</reference>
<sequence>MTISVAVSGASGYAGGEVLRLLAGHPNVTIGAITAHSNAGSRLGELQPHLHGLASRILEDTTVENLSGHDVVFLALPHGASAEIAAQLPEGTVVIDAGADHRLQDAAAWERFYGSAHAGTWPYGLPELPGQREALKGATRIAVPGCYPTSALLALTPGFANNLLLTDDVVIVSASGTSGAGKAAKVNLIGAEVMGSMSPYGVGGGHRHTPEIEQGLSNAAGEPVTVSFTPTLVPMSRGILTTATAKVGHGVSYAELRQAWADAYDDEPFVHLLPEGQWPTTKSVQGSNHAVMQLAFDAHTGRVIVTCAIDNLTKGTAGGAVQSMNIALGLDETAGLNLQGVAP</sequence>
<gene>
    <name evidence="1" type="primary">argC</name>
    <name type="ordered locus">AAur_1631</name>
</gene>
<protein>
    <recommendedName>
        <fullName evidence="1">N-acetyl-gamma-glutamyl-phosphate reductase</fullName>
        <shortName evidence="1">AGPR</shortName>
        <ecNumber evidence="1">1.2.1.38</ecNumber>
    </recommendedName>
    <alternativeName>
        <fullName evidence="1">N-acetyl-glutamate semialdehyde dehydrogenase</fullName>
        <shortName evidence="1">NAGSA dehydrogenase</shortName>
    </alternativeName>
</protein>
<comment type="function">
    <text evidence="1">Catalyzes the NADPH-dependent reduction of N-acetyl-5-glutamyl phosphate to yield N-acetyl-L-glutamate 5-semialdehyde.</text>
</comment>
<comment type="catalytic activity">
    <reaction evidence="1">
        <text>N-acetyl-L-glutamate 5-semialdehyde + phosphate + NADP(+) = N-acetyl-L-glutamyl 5-phosphate + NADPH + H(+)</text>
        <dbReference type="Rhea" id="RHEA:21588"/>
        <dbReference type="ChEBI" id="CHEBI:15378"/>
        <dbReference type="ChEBI" id="CHEBI:29123"/>
        <dbReference type="ChEBI" id="CHEBI:43474"/>
        <dbReference type="ChEBI" id="CHEBI:57783"/>
        <dbReference type="ChEBI" id="CHEBI:57936"/>
        <dbReference type="ChEBI" id="CHEBI:58349"/>
        <dbReference type="EC" id="1.2.1.38"/>
    </reaction>
</comment>
<comment type="pathway">
    <text evidence="1">Amino-acid biosynthesis; L-arginine biosynthesis; N(2)-acetyl-L-ornithine from L-glutamate: step 3/4.</text>
</comment>
<comment type="subcellular location">
    <subcellularLocation>
        <location evidence="1">Cytoplasm</location>
    </subcellularLocation>
</comment>
<comment type="similarity">
    <text evidence="1">Belongs to the NAGSA dehydrogenase family. Type 1 subfamily.</text>
</comment>
<accession>A1R585</accession>
<name>ARGC_PAEAT</name>
<evidence type="ECO:0000255" key="1">
    <source>
        <dbReference type="HAMAP-Rule" id="MF_00150"/>
    </source>
</evidence>